<sequence length="51" mass="6004">MAGNKPLGKKIRLAKALKQNRRVPMFAIARTKGSVKQHPKMRHWRRKNLKK</sequence>
<comment type="similarity">
    <text evidence="1">Belongs to the eukaryotic ribosomal protein eL39 family.</text>
</comment>
<protein>
    <recommendedName>
        <fullName evidence="1">Large ribosomal subunit protein eL39</fullName>
    </recommendedName>
    <alternativeName>
        <fullName evidence="3">50S ribosomal protein L39e</fullName>
    </alternativeName>
</protein>
<name>RL39_METM6</name>
<organism>
    <name type="scientific">Methanococcus maripaludis (strain C6 / ATCC BAA-1332)</name>
    <dbReference type="NCBI Taxonomy" id="444158"/>
    <lineage>
        <taxon>Archaea</taxon>
        <taxon>Methanobacteriati</taxon>
        <taxon>Methanobacteriota</taxon>
        <taxon>Methanomada group</taxon>
        <taxon>Methanococci</taxon>
        <taxon>Methanococcales</taxon>
        <taxon>Methanococcaceae</taxon>
        <taxon>Methanococcus</taxon>
    </lineage>
</organism>
<proteinExistence type="inferred from homology"/>
<feature type="chain" id="PRO_1000130581" description="Large ribosomal subunit protein eL39">
    <location>
        <begin position="1"/>
        <end position="51"/>
    </location>
</feature>
<feature type="region of interest" description="Disordered" evidence="2">
    <location>
        <begin position="32"/>
        <end position="51"/>
    </location>
</feature>
<feature type="compositionally biased region" description="Basic residues" evidence="2">
    <location>
        <begin position="33"/>
        <end position="51"/>
    </location>
</feature>
<reference key="1">
    <citation type="submission" date="2007-10" db="EMBL/GenBank/DDBJ databases">
        <title>Complete sequence of Methanococcus maripaludis C6.</title>
        <authorList>
            <consortium name="US DOE Joint Genome Institute"/>
            <person name="Copeland A."/>
            <person name="Lucas S."/>
            <person name="Lapidus A."/>
            <person name="Barry K."/>
            <person name="Glavina del Rio T."/>
            <person name="Dalin E."/>
            <person name="Tice H."/>
            <person name="Pitluck S."/>
            <person name="Clum A."/>
            <person name="Schmutz J."/>
            <person name="Larimer F."/>
            <person name="Land M."/>
            <person name="Hauser L."/>
            <person name="Kyrpides N."/>
            <person name="Mikhailova N."/>
            <person name="Sieprawska-Lupa M."/>
            <person name="Whitman W.B."/>
            <person name="Richardson P."/>
        </authorList>
    </citation>
    <scope>NUCLEOTIDE SEQUENCE [LARGE SCALE GENOMIC DNA]</scope>
    <source>
        <strain>C6 / ATCC BAA-1332</strain>
    </source>
</reference>
<accession>A9A8D5</accession>
<dbReference type="EMBL" id="CP000867">
    <property type="protein sequence ID" value="ABX01608.1"/>
    <property type="molecule type" value="Genomic_DNA"/>
</dbReference>
<dbReference type="SMR" id="A9A8D5"/>
<dbReference type="STRING" id="444158.MmarC6_0791"/>
<dbReference type="KEGG" id="mmx:MmarC6_0791"/>
<dbReference type="eggNOG" id="arCOG04177">
    <property type="taxonomic scope" value="Archaea"/>
</dbReference>
<dbReference type="HOGENOM" id="CLU_181948_4_0_2"/>
<dbReference type="OrthoDB" id="65887at2157"/>
<dbReference type="PhylomeDB" id="A9A8D5"/>
<dbReference type="GO" id="GO:1990904">
    <property type="term" value="C:ribonucleoprotein complex"/>
    <property type="evidence" value="ECO:0007669"/>
    <property type="project" value="UniProtKB-KW"/>
</dbReference>
<dbReference type="GO" id="GO:0005840">
    <property type="term" value="C:ribosome"/>
    <property type="evidence" value="ECO:0007669"/>
    <property type="project" value="UniProtKB-KW"/>
</dbReference>
<dbReference type="GO" id="GO:0003735">
    <property type="term" value="F:structural constituent of ribosome"/>
    <property type="evidence" value="ECO:0007669"/>
    <property type="project" value="InterPro"/>
</dbReference>
<dbReference type="GO" id="GO:0006412">
    <property type="term" value="P:translation"/>
    <property type="evidence" value="ECO:0007669"/>
    <property type="project" value="UniProtKB-UniRule"/>
</dbReference>
<dbReference type="Gene3D" id="1.10.1620.10">
    <property type="entry name" value="Ribosomal protein L39e"/>
    <property type="match status" value="1"/>
</dbReference>
<dbReference type="HAMAP" id="MF_00629">
    <property type="entry name" value="Ribosomal_eL39"/>
    <property type="match status" value="1"/>
</dbReference>
<dbReference type="InterPro" id="IPR000077">
    <property type="entry name" value="Ribosomal_eL39"/>
</dbReference>
<dbReference type="InterPro" id="IPR020083">
    <property type="entry name" value="Ribosomal_eL39_CS"/>
</dbReference>
<dbReference type="InterPro" id="IPR023626">
    <property type="entry name" value="Ribosomal_eL39_dom_sf"/>
</dbReference>
<dbReference type="NCBIfam" id="NF002316">
    <property type="entry name" value="PRK01242.1"/>
    <property type="match status" value="1"/>
</dbReference>
<dbReference type="Pfam" id="PF00832">
    <property type="entry name" value="Ribosomal_L39"/>
    <property type="match status" value="1"/>
</dbReference>
<dbReference type="SUPFAM" id="SSF48662">
    <property type="entry name" value="Ribosomal protein L39e"/>
    <property type="match status" value="1"/>
</dbReference>
<dbReference type="PROSITE" id="PS00051">
    <property type="entry name" value="RIBOSOMAL_L39E"/>
    <property type="match status" value="1"/>
</dbReference>
<evidence type="ECO:0000255" key="1">
    <source>
        <dbReference type="HAMAP-Rule" id="MF_00629"/>
    </source>
</evidence>
<evidence type="ECO:0000256" key="2">
    <source>
        <dbReference type="SAM" id="MobiDB-lite"/>
    </source>
</evidence>
<evidence type="ECO:0000305" key="3"/>
<gene>
    <name evidence="1" type="primary">rpl39e</name>
    <name type="ordered locus">MmarC6_0791</name>
</gene>
<keyword id="KW-0687">Ribonucleoprotein</keyword>
<keyword id="KW-0689">Ribosomal protein</keyword>